<comment type="function">
    <text evidence="1">Modulates RecA activity.</text>
</comment>
<comment type="subcellular location">
    <subcellularLocation>
        <location evidence="1">Cytoplasm</location>
    </subcellularLocation>
</comment>
<comment type="similarity">
    <text evidence="1">Belongs to the RecX family.</text>
</comment>
<dbReference type="EMBL" id="CP001164">
    <property type="protein sequence ID" value="ACI36723.1"/>
    <property type="molecule type" value="Genomic_DNA"/>
</dbReference>
<dbReference type="RefSeq" id="WP_000140506.1">
    <property type="nucleotide sequence ID" value="NC_011353.1"/>
</dbReference>
<dbReference type="SMR" id="B5Z2A9"/>
<dbReference type="GeneID" id="75172780"/>
<dbReference type="KEGG" id="ecf:ECH74115_3945"/>
<dbReference type="HOGENOM" id="CLU_066607_3_2_6"/>
<dbReference type="GO" id="GO:0005737">
    <property type="term" value="C:cytoplasm"/>
    <property type="evidence" value="ECO:0007669"/>
    <property type="project" value="UniProtKB-SubCell"/>
</dbReference>
<dbReference type="GO" id="GO:0006282">
    <property type="term" value="P:regulation of DNA repair"/>
    <property type="evidence" value="ECO:0007669"/>
    <property type="project" value="UniProtKB-UniRule"/>
</dbReference>
<dbReference type="FunFam" id="1.10.10.10:FF:000133">
    <property type="entry name" value="Regulatory protein RecX"/>
    <property type="match status" value="1"/>
</dbReference>
<dbReference type="FunFam" id="1.10.10.10:FF:000134">
    <property type="entry name" value="Regulatory protein RecX"/>
    <property type="match status" value="1"/>
</dbReference>
<dbReference type="FunFam" id="1.10.10.10:FF:000209">
    <property type="entry name" value="Regulatory protein RecX"/>
    <property type="match status" value="1"/>
</dbReference>
<dbReference type="Gene3D" id="1.10.10.10">
    <property type="entry name" value="Winged helix-like DNA-binding domain superfamily/Winged helix DNA-binding domain"/>
    <property type="match status" value="3"/>
</dbReference>
<dbReference type="HAMAP" id="MF_01114">
    <property type="entry name" value="RecX"/>
    <property type="match status" value="1"/>
</dbReference>
<dbReference type="InterPro" id="IPR053926">
    <property type="entry name" value="RecX_HTH_1st"/>
</dbReference>
<dbReference type="InterPro" id="IPR053924">
    <property type="entry name" value="RecX_HTH_2nd"/>
</dbReference>
<dbReference type="InterPro" id="IPR053925">
    <property type="entry name" value="RecX_HTH_3rd"/>
</dbReference>
<dbReference type="InterPro" id="IPR003783">
    <property type="entry name" value="Regulatory_RecX"/>
</dbReference>
<dbReference type="InterPro" id="IPR036388">
    <property type="entry name" value="WH-like_DNA-bd_sf"/>
</dbReference>
<dbReference type="NCBIfam" id="NF001052">
    <property type="entry name" value="PRK00117.1-1"/>
    <property type="match status" value="1"/>
</dbReference>
<dbReference type="PANTHER" id="PTHR33602">
    <property type="entry name" value="REGULATORY PROTEIN RECX FAMILY PROTEIN"/>
    <property type="match status" value="1"/>
</dbReference>
<dbReference type="PANTHER" id="PTHR33602:SF1">
    <property type="entry name" value="REGULATORY PROTEIN RECX FAMILY PROTEIN"/>
    <property type="match status" value="1"/>
</dbReference>
<dbReference type="Pfam" id="PF21982">
    <property type="entry name" value="RecX_HTH1"/>
    <property type="match status" value="1"/>
</dbReference>
<dbReference type="Pfam" id="PF02631">
    <property type="entry name" value="RecX_HTH2"/>
    <property type="match status" value="1"/>
</dbReference>
<dbReference type="Pfam" id="PF21981">
    <property type="entry name" value="RecX_HTH3"/>
    <property type="match status" value="1"/>
</dbReference>
<accession>B5Z2A9</accession>
<evidence type="ECO:0000255" key="1">
    <source>
        <dbReference type="HAMAP-Rule" id="MF_01114"/>
    </source>
</evidence>
<name>RECX_ECO5E</name>
<gene>
    <name evidence="1" type="primary">recX</name>
    <name type="ordered locus">ECH74115_3945</name>
</gene>
<sequence>MTESTSRRPAYARLLDRAVRILAVRDHSEQELRRKLAAPIMGKNGPEEIDATAEDYERVIAWCHEHGYLDDSRFVARFIASRSRKGYGPARIRQELNQKGISREATEKAMRECDIDWCALARDQATRKYGEPLPTVFSEKVKIQRFLLYRGYLMEDIQDIWRNFAD</sequence>
<feature type="chain" id="PRO_1000137161" description="Regulatory protein RecX">
    <location>
        <begin position="1"/>
        <end position="166"/>
    </location>
</feature>
<organism>
    <name type="scientific">Escherichia coli O157:H7 (strain EC4115 / EHEC)</name>
    <dbReference type="NCBI Taxonomy" id="444450"/>
    <lineage>
        <taxon>Bacteria</taxon>
        <taxon>Pseudomonadati</taxon>
        <taxon>Pseudomonadota</taxon>
        <taxon>Gammaproteobacteria</taxon>
        <taxon>Enterobacterales</taxon>
        <taxon>Enterobacteriaceae</taxon>
        <taxon>Escherichia</taxon>
    </lineage>
</organism>
<keyword id="KW-0963">Cytoplasm</keyword>
<reference key="1">
    <citation type="journal article" date="2011" name="Proc. Natl. Acad. Sci. U.S.A.">
        <title>Genomic anatomy of Escherichia coli O157:H7 outbreaks.</title>
        <authorList>
            <person name="Eppinger M."/>
            <person name="Mammel M.K."/>
            <person name="Leclerc J.E."/>
            <person name="Ravel J."/>
            <person name="Cebula T.A."/>
        </authorList>
    </citation>
    <scope>NUCLEOTIDE SEQUENCE [LARGE SCALE GENOMIC DNA]</scope>
    <source>
        <strain>EC4115 / EHEC</strain>
    </source>
</reference>
<proteinExistence type="inferred from homology"/>
<protein>
    <recommendedName>
        <fullName evidence="1">Regulatory protein RecX</fullName>
    </recommendedName>
</protein>